<reference key="1">
    <citation type="journal article" date="2004" name="Science">
        <title>Illuminating the evolutionary history of chlamydiae.</title>
        <authorList>
            <person name="Horn M."/>
            <person name="Collingro A."/>
            <person name="Schmitz-Esser S."/>
            <person name="Beier C.L."/>
            <person name="Purkhold U."/>
            <person name="Fartmann B."/>
            <person name="Brandt P."/>
            <person name="Nyakatura G.J."/>
            <person name="Droege M."/>
            <person name="Frishman D."/>
            <person name="Rattei T."/>
            <person name="Mewes H.-W."/>
            <person name="Wagner M."/>
        </authorList>
    </citation>
    <scope>NUCLEOTIDE SEQUENCE [LARGE SCALE GENOMIC DNA]</scope>
    <source>
        <strain>UWE25</strain>
    </source>
</reference>
<protein>
    <recommendedName>
        <fullName evidence="1">Small ribosomal subunit protein bS16</fullName>
    </recommendedName>
    <alternativeName>
        <fullName evidence="2">30S ribosomal protein S16</fullName>
    </alternativeName>
</protein>
<evidence type="ECO:0000255" key="1">
    <source>
        <dbReference type="HAMAP-Rule" id="MF_00385"/>
    </source>
</evidence>
<evidence type="ECO:0000305" key="2"/>
<accession>Q6MDH0</accession>
<organism>
    <name type="scientific">Protochlamydia amoebophila (strain UWE25)</name>
    <dbReference type="NCBI Taxonomy" id="264201"/>
    <lineage>
        <taxon>Bacteria</taxon>
        <taxon>Pseudomonadati</taxon>
        <taxon>Chlamydiota</taxon>
        <taxon>Chlamydiia</taxon>
        <taxon>Parachlamydiales</taxon>
        <taxon>Parachlamydiaceae</taxon>
        <taxon>Candidatus Protochlamydia</taxon>
    </lineage>
</organism>
<name>RS16_PARUW</name>
<proteinExistence type="inferred from homology"/>
<sequence>MALKIRLRQHGRTNRSFFRLVVTDARSPRDGKYVEALGWYNPVEAEDDKKLFFKADRIQHWLNLGAELTESAASLIKKTSPEIIRAQTEKKLNSLAKAATKRKKKD</sequence>
<comment type="similarity">
    <text evidence="1">Belongs to the bacterial ribosomal protein bS16 family.</text>
</comment>
<keyword id="KW-1185">Reference proteome</keyword>
<keyword id="KW-0687">Ribonucleoprotein</keyword>
<keyword id="KW-0689">Ribosomal protein</keyword>
<feature type="chain" id="PRO_0000243840" description="Small ribosomal subunit protein bS16">
    <location>
        <begin position="1"/>
        <end position="106"/>
    </location>
</feature>
<dbReference type="EMBL" id="BX908798">
    <property type="protein sequence ID" value="CAF23379.1"/>
    <property type="molecule type" value="Genomic_DNA"/>
</dbReference>
<dbReference type="RefSeq" id="WP_011175205.1">
    <property type="nucleotide sequence ID" value="NC_005861.2"/>
</dbReference>
<dbReference type="SMR" id="Q6MDH0"/>
<dbReference type="STRING" id="264201.pc0655"/>
<dbReference type="KEGG" id="pcu:PC_RS03145"/>
<dbReference type="eggNOG" id="COG0228">
    <property type="taxonomic scope" value="Bacteria"/>
</dbReference>
<dbReference type="HOGENOM" id="CLU_100590_3_1_0"/>
<dbReference type="OrthoDB" id="9807878at2"/>
<dbReference type="Proteomes" id="UP000000529">
    <property type="component" value="Chromosome"/>
</dbReference>
<dbReference type="GO" id="GO:0005737">
    <property type="term" value="C:cytoplasm"/>
    <property type="evidence" value="ECO:0007669"/>
    <property type="project" value="UniProtKB-ARBA"/>
</dbReference>
<dbReference type="GO" id="GO:0015935">
    <property type="term" value="C:small ribosomal subunit"/>
    <property type="evidence" value="ECO:0007669"/>
    <property type="project" value="TreeGrafter"/>
</dbReference>
<dbReference type="GO" id="GO:0003735">
    <property type="term" value="F:structural constituent of ribosome"/>
    <property type="evidence" value="ECO:0007669"/>
    <property type="project" value="InterPro"/>
</dbReference>
<dbReference type="GO" id="GO:0006412">
    <property type="term" value="P:translation"/>
    <property type="evidence" value="ECO:0007669"/>
    <property type="project" value="UniProtKB-UniRule"/>
</dbReference>
<dbReference type="Gene3D" id="3.30.1320.10">
    <property type="match status" value="1"/>
</dbReference>
<dbReference type="HAMAP" id="MF_00385">
    <property type="entry name" value="Ribosomal_bS16"/>
    <property type="match status" value="1"/>
</dbReference>
<dbReference type="InterPro" id="IPR000307">
    <property type="entry name" value="Ribosomal_bS16"/>
</dbReference>
<dbReference type="InterPro" id="IPR023803">
    <property type="entry name" value="Ribosomal_bS16_dom_sf"/>
</dbReference>
<dbReference type="NCBIfam" id="TIGR00002">
    <property type="entry name" value="S16"/>
    <property type="match status" value="1"/>
</dbReference>
<dbReference type="PANTHER" id="PTHR12919">
    <property type="entry name" value="30S RIBOSOMAL PROTEIN S16"/>
    <property type="match status" value="1"/>
</dbReference>
<dbReference type="PANTHER" id="PTHR12919:SF20">
    <property type="entry name" value="SMALL RIBOSOMAL SUBUNIT PROTEIN BS16M"/>
    <property type="match status" value="1"/>
</dbReference>
<dbReference type="Pfam" id="PF00886">
    <property type="entry name" value="Ribosomal_S16"/>
    <property type="match status" value="1"/>
</dbReference>
<dbReference type="SUPFAM" id="SSF54565">
    <property type="entry name" value="Ribosomal protein S16"/>
    <property type="match status" value="1"/>
</dbReference>
<gene>
    <name evidence="1" type="primary">rpsP</name>
    <name type="ordered locus">pc0655</name>
</gene>